<name>OCTB2_DROME</name>
<proteinExistence type="evidence at transcript level"/>
<evidence type="ECO:0000255" key="1"/>
<evidence type="ECO:0000255" key="2">
    <source>
        <dbReference type="PROSITE-ProRule" id="PRU00521"/>
    </source>
</evidence>
<evidence type="ECO:0000256" key="3">
    <source>
        <dbReference type="SAM" id="MobiDB-lite"/>
    </source>
</evidence>
<evidence type="ECO:0000269" key="4">
    <source>
    </source>
</evidence>
<evidence type="ECO:0000269" key="5">
    <source>
    </source>
</evidence>
<evidence type="ECO:0000269" key="6">
    <source>
    </source>
</evidence>
<evidence type="ECO:0000269" key="7">
    <source>
    </source>
</evidence>
<evidence type="ECO:0000269" key="8">
    <source>
    </source>
</evidence>
<evidence type="ECO:0000269" key="9">
    <source>
    </source>
</evidence>
<evidence type="ECO:0000305" key="10"/>
<evidence type="ECO:0000312" key="11">
    <source>
        <dbReference type="EMBL" id="CAI56430.1"/>
    </source>
</evidence>
<evidence type="ECO:0000312" key="12">
    <source>
        <dbReference type="FlyBase" id="FBgn0038063"/>
    </source>
</evidence>
<reference evidence="11" key="1">
    <citation type="journal article" date="2005" name="J. Neurochem.">
        <title>Identification and characterization of a novel family of Drosophila beta-adrenergic-like octopamine G-protein coupled receptors.</title>
        <authorList>
            <person name="Maqueira B."/>
            <person name="Chatwin H."/>
            <person name="Evans P.D."/>
        </authorList>
    </citation>
    <scope>NUCLEOTIDE SEQUENCE [MRNA]</scope>
    <scope>FUNCTION</scope>
    <source>
        <tissue evidence="11">Head</tissue>
    </source>
</reference>
<reference key="2">
    <citation type="journal article" date="2000" name="Science">
        <title>The genome sequence of Drosophila melanogaster.</title>
        <authorList>
            <person name="Adams M.D."/>
            <person name="Celniker S.E."/>
            <person name="Holt R.A."/>
            <person name="Evans C.A."/>
            <person name="Gocayne J.D."/>
            <person name="Amanatides P.G."/>
            <person name="Scherer S.E."/>
            <person name="Li P.W."/>
            <person name="Hoskins R.A."/>
            <person name="Galle R.F."/>
            <person name="George R.A."/>
            <person name="Lewis S.E."/>
            <person name="Richards S."/>
            <person name="Ashburner M."/>
            <person name="Henderson S.N."/>
            <person name="Sutton G.G."/>
            <person name="Wortman J.R."/>
            <person name="Yandell M.D."/>
            <person name="Zhang Q."/>
            <person name="Chen L.X."/>
            <person name="Brandon R.C."/>
            <person name="Rogers Y.-H.C."/>
            <person name="Blazej R.G."/>
            <person name="Champe M."/>
            <person name="Pfeiffer B.D."/>
            <person name="Wan K.H."/>
            <person name="Doyle C."/>
            <person name="Baxter E.G."/>
            <person name="Helt G."/>
            <person name="Nelson C.R."/>
            <person name="Miklos G.L.G."/>
            <person name="Abril J.F."/>
            <person name="Agbayani A."/>
            <person name="An H.-J."/>
            <person name="Andrews-Pfannkoch C."/>
            <person name="Baldwin D."/>
            <person name="Ballew R.M."/>
            <person name="Basu A."/>
            <person name="Baxendale J."/>
            <person name="Bayraktaroglu L."/>
            <person name="Beasley E.M."/>
            <person name="Beeson K.Y."/>
            <person name="Benos P.V."/>
            <person name="Berman B.P."/>
            <person name="Bhandari D."/>
            <person name="Bolshakov S."/>
            <person name="Borkova D."/>
            <person name="Botchan M.R."/>
            <person name="Bouck J."/>
            <person name="Brokstein P."/>
            <person name="Brottier P."/>
            <person name="Burtis K.C."/>
            <person name="Busam D.A."/>
            <person name="Butler H."/>
            <person name="Cadieu E."/>
            <person name="Center A."/>
            <person name="Chandra I."/>
            <person name="Cherry J.M."/>
            <person name="Cawley S."/>
            <person name="Dahlke C."/>
            <person name="Davenport L.B."/>
            <person name="Davies P."/>
            <person name="de Pablos B."/>
            <person name="Delcher A."/>
            <person name="Deng Z."/>
            <person name="Mays A.D."/>
            <person name="Dew I."/>
            <person name="Dietz S.M."/>
            <person name="Dodson K."/>
            <person name="Doup L.E."/>
            <person name="Downes M."/>
            <person name="Dugan-Rocha S."/>
            <person name="Dunkov B.C."/>
            <person name="Dunn P."/>
            <person name="Durbin K.J."/>
            <person name="Evangelista C.C."/>
            <person name="Ferraz C."/>
            <person name="Ferriera S."/>
            <person name="Fleischmann W."/>
            <person name="Fosler C."/>
            <person name="Gabrielian A.E."/>
            <person name="Garg N.S."/>
            <person name="Gelbart W.M."/>
            <person name="Glasser K."/>
            <person name="Glodek A."/>
            <person name="Gong F."/>
            <person name="Gorrell J.H."/>
            <person name="Gu Z."/>
            <person name="Guan P."/>
            <person name="Harris M."/>
            <person name="Harris N.L."/>
            <person name="Harvey D.A."/>
            <person name="Heiman T.J."/>
            <person name="Hernandez J.R."/>
            <person name="Houck J."/>
            <person name="Hostin D."/>
            <person name="Houston K.A."/>
            <person name="Howland T.J."/>
            <person name="Wei M.-H."/>
            <person name="Ibegwam C."/>
            <person name="Jalali M."/>
            <person name="Kalush F."/>
            <person name="Karpen G.H."/>
            <person name="Ke Z."/>
            <person name="Kennison J.A."/>
            <person name="Ketchum K.A."/>
            <person name="Kimmel B.E."/>
            <person name="Kodira C.D."/>
            <person name="Kraft C.L."/>
            <person name="Kravitz S."/>
            <person name="Kulp D."/>
            <person name="Lai Z."/>
            <person name="Lasko P."/>
            <person name="Lei Y."/>
            <person name="Levitsky A.A."/>
            <person name="Li J.H."/>
            <person name="Li Z."/>
            <person name="Liang Y."/>
            <person name="Lin X."/>
            <person name="Liu X."/>
            <person name="Mattei B."/>
            <person name="McIntosh T.C."/>
            <person name="McLeod M.P."/>
            <person name="McPherson D."/>
            <person name="Merkulov G."/>
            <person name="Milshina N.V."/>
            <person name="Mobarry C."/>
            <person name="Morris J."/>
            <person name="Moshrefi A."/>
            <person name="Mount S.M."/>
            <person name="Moy M."/>
            <person name="Murphy B."/>
            <person name="Murphy L."/>
            <person name="Muzny D.M."/>
            <person name="Nelson D.L."/>
            <person name="Nelson D.R."/>
            <person name="Nelson K.A."/>
            <person name="Nixon K."/>
            <person name="Nusskern D.R."/>
            <person name="Pacleb J.M."/>
            <person name="Palazzolo M."/>
            <person name="Pittman G.S."/>
            <person name="Pan S."/>
            <person name="Pollard J."/>
            <person name="Puri V."/>
            <person name="Reese M.G."/>
            <person name="Reinert K."/>
            <person name="Remington K."/>
            <person name="Saunders R.D.C."/>
            <person name="Scheeler F."/>
            <person name="Shen H."/>
            <person name="Shue B.C."/>
            <person name="Siden-Kiamos I."/>
            <person name="Simpson M."/>
            <person name="Skupski M.P."/>
            <person name="Smith T.J."/>
            <person name="Spier E."/>
            <person name="Spradling A.C."/>
            <person name="Stapleton M."/>
            <person name="Strong R."/>
            <person name="Sun E."/>
            <person name="Svirskas R."/>
            <person name="Tector C."/>
            <person name="Turner R."/>
            <person name="Venter E."/>
            <person name="Wang A.H."/>
            <person name="Wang X."/>
            <person name="Wang Z.-Y."/>
            <person name="Wassarman D.A."/>
            <person name="Weinstock G.M."/>
            <person name="Weissenbach J."/>
            <person name="Williams S.M."/>
            <person name="Woodage T."/>
            <person name="Worley K.C."/>
            <person name="Wu D."/>
            <person name="Yang S."/>
            <person name="Yao Q.A."/>
            <person name="Ye J."/>
            <person name="Yeh R.-F."/>
            <person name="Zaveri J.S."/>
            <person name="Zhan M."/>
            <person name="Zhang G."/>
            <person name="Zhao Q."/>
            <person name="Zheng L."/>
            <person name="Zheng X.H."/>
            <person name="Zhong F.N."/>
            <person name="Zhong W."/>
            <person name="Zhou X."/>
            <person name="Zhu S.C."/>
            <person name="Zhu X."/>
            <person name="Smith H.O."/>
            <person name="Gibbs R.A."/>
            <person name="Myers E.W."/>
            <person name="Rubin G.M."/>
            <person name="Venter J.C."/>
        </authorList>
    </citation>
    <scope>NUCLEOTIDE SEQUENCE [LARGE SCALE GENOMIC DNA]</scope>
    <source>
        <strain evidence="4">Berkeley</strain>
    </source>
</reference>
<reference evidence="10" key="3">
    <citation type="journal article" date="2002" name="Genome Biol.">
        <title>Annotation of the Drosophila melanogaster euchromatic genome: a systematic review.</title>
        <authorList>
            <person name="Misra S."/>
            <person name="Crosby M.A."/>
            <person name="Mungall C.J."/>
            <person name="Matthews B.B."/>
            <person name="Campbell K.S."/>
            <person name="Hradecky P."/>
            <person name="Huang Y."/>
            <person name="Kaminker J.S."/>
            <person name="Millburn G.H."/>
            <person name="Prochnik S.E."/>
            <person name="Smith C.D."/>
            <person name="Tupy J.L."/>
            <person name="Whitfield E.J."/>
            <person name="Bayraktaroglu L."/>
            <person name="Berman B.P."/>
            <person name="Bettencourt B.R."/>
            <person name="Celniker S.E."/>
            <person name="de Grey A.D.N.J."/>
            <person name="Drysdale R.A."/>
            <person name="Harris N.L."/>
            <person name="Richter J."/>
            <person name="Russo S."/>
            <person name="Schroeder A.J."/>
            <person name="Shu S.Q."/>
            <person name="Stapleton M."/>
            <person name="Yamada C."/>
            <person name="Ashburner M."/>
            <person name="Gelbart W.M."/>
            <person name="Rubin G.M."/>
            <person name="Lewis S.E."/>
        </authorList>
    </citation>
    <scope>GENOME REANNOTATION</scope>
    <source>
        <strain>Berkeley</strain>
    </source>
</reference>
<reference key="4">
    <citation type="journal article" date="2011" name="Nat. Neurosci.">
        <title>Autoregulatory and paracrine control of synaptic and behavioral plasticity by octopaminergic signaling.</title>
        <authorList>
            <person name="Koon A.C."/>
            <person name="Ashley J."/>
            <person name="Barria R."/>
            <person name="DasGupta S."/>
            <person name="Brain R."/>
            <person name="Waddell S."/>
            <person name="Alkema M.J."/>
            <person name="Budnik V."/>
        </authorList>
    </citation>
    <scope>FUNCTION</scope>
    <scope>TISSUE SPECIFICITY</scope>
    <scope>DISRUPTION PHENOTYPE</scope>
</reference>
<reference key="5">
    <citation type="journal article" date="2012" name="J. Neurosci.">
        <title>Inhibitory control of synaptic and behavioral plasticity by octopaminergic signaling.</title>
        <authorList>
            <person name="Koon A.C."/>
            <person name="Budnik V."/>
        </authorList>
    </citation>
    <scope>FUNCTION</scope>
</reference>
<reference key="6">
    <citation type="journal article" date="2012" name="Zool. Sci.">
        <title>Expression of beta-adrenergic-like octopamine receptors during Drosophila development.</title>
        <authorList>
            <person name="Ohhara Y."/>
            <person name="Kayashima Y."/>
            <person name="Hayashi Y."/>
            <person name="Kobayashi S."/>
            <person name="Yamakawa-Kobayashi K."/>
        </authorList>
    </citation>
    <scope>TISSUE SPECIFICITY</scope>
    <scope>DEVELOPMENTAL STAGE</scope>
</reference>
<reference key="7">
    <citation type="journal article" date="2014" name="PLoS ONE">
        <title>The octopamine receptor Octbeta2R regulates ovulation in Drosophila melanogaster.</title>
        <authorList>
            <person name="Lim J."/>
            <person name="Sabandal P.R."/>
            <person name="Fernandez A."/>
            <person name="Sabandal J.M."/>
            <person name="Lee H.G."/>
            <person name="Evans P."/>
            <person name="Han K.A."/>
        </authorList>
    </citation>
    <scope>FUNCTION</scope>
    <scope>TISSUE SPECIFICITY</scope>
    <scope>DISRUPTION PHENOTYPE</scope>
</reference>
<reference key="8">
    <citation type="journal article" date="2015" name="Arch. Insect Biochem. Physiol.">
        <title>The octopamine receptor octss2R is essential for ovulation and fertilization in the fruit fly Drosophila melanogaster.</title>
        <authorList>
            <person name="Li Y."/>
            <person name="Fink C."/>
            <person name="El-Kholy S."/>
            <person name="Roeder T."/>
        </authorList>
    </citation>
    <scope>FUNCTION</scope>
    <scope>TISSUE SPECIFICITY</scope>
    <scope>DISRUPTION PHENOTYPE</scope>
</reference>
<organism>
    <name type="scientific">Drosophila melanogaster</name>
    <name type="common">Fruit fly</name>
    <dbReference type="NCBI Taxonomy" id="7227"/>
    <lineage>
        <taxon>Eukaryota</taxon>
        <taxon>Metazoa</taxon>
        <taxon>Ecdysozoa</taxon>
        <taxon>Arthropoda</taxon>
        <taxon>Hexapoda</taxon>
        <taxon>Insecta</taxon>
        <taxon>Pterygota</taxon>
        <taxon>Neoptera</taxon>
        <taxon>Endopterygota</taxon>
        <taxon>Diptera</taxon>
        <taxon>Brachycera</taxon>
        <taxon>Muscomorpha</taxon>
        <taxon>Ephydroidea</taxon>
        <taxon>Drosophilidae</taxon>
        <taxon>Drosophila</taxon>
        <taxon>Sophophora</taxon>
    </lineage>
</organism>
<accession>Q4LBB9</accession>
<accession>B7FNM5</accession>
<accession>Q9VG53</accession>
<accession>Q9VG54</accession>
<feature type="chain" id="PRO_0000069960" description="Octopamine receptor beta-2R">
    <location>
        <begin position="1"/>
        <end position="536"/>
    </location>
</feature>
<feature type="topological domain" description="Extracellular" evidence="1">
    <location>
        <begin position="1"/>
        <end position="157"/>
    </location>
</feature>
<feature type="transmembrane region" description="Helical; Name=1" evidence="1">
    <location>
        <begin position="158"/>
        <end position="178"/>
    </location>
</feature>
<feature type="topological domain" description="Cytoplasmic" evidence="1">
    <location>
        <begin position="179"/>
        <end position="190"/>
    </location>
</feature>
<feature type="transmembrane region" description="Helical; Name=2" evidence="1">
    <location>
        <begin position="191"/>
        <end position="211"/>
    </location>
</feature>
<feature type="topological domain" description="Extracellular" evidence="1">
    <location>
        <begin position="212"/>
        <end position="233"/>
    </location>
</feature>
<feature type="transmembrane region" description="Helical; Name=3" evidence="1">
    <location>
        <begin position="234"/>
        <end position="256"/>
    </location>
</feature>
<feature type="topological domain" description="Cytoplasmic" evidence="1">
    <location>
        <begin position="257"/>
        <end position="270"/>
    </location>
</feature>
<feature type="transmembrane region" description="Helical; Name=4" evidence="1">
    <location>
        <begin position="271"/>
        <end position="291"/>
    </location>
</feature>
<feature type="topological domain" description="Extracellular" evidence="1">
    <location>
        <begin position="292"/>
        <end position="320"/>
    </location>
</feature>
<feature type="transmembrane region" description="Helical; Name=5" evidence="1">
    <location>
        <begin position="321"/>
        <end position="341"/>
    </location>
</feature>
<feature type="topological domain" description="Cytoplasmic" evidence="1">
    <location>
        <begin position="342"/>
        <end position="412"/>
    </location>
</feature>
<feature type="transmembrane region" description="Helical; Name=6" evidence="1">
    <location>
        <begin position="413"/>
        <end position="433"/>
    </location>
</feature>
<feature type="topological domain" description="Extracellular" evidence="1">
    <location>
        <begin position="434"/>
        <end position="444"/>
    </location>
</feature>
<feature type="transmembrane region" description="Helical; Name=7" evidence="1">
    <location>
        <begin position="445"/>
        <end position="465"/>
    </location>
</feature>
<feature type="topological domain" description="Cytoplasmic" evidence="1">
    <location>
        <begin position="466"/>
        <end position="536"/>
    </location>
</feature>
<feature type="region of interest" description="Disordered" evidence="3">
    <location>
        <begin position="1"/>
        <end position="26"/>
    </location>
</feature>
<feature type="compositionally biased region" description="Basic residues" evidence="3">
    <location>
        <begin position="14"/>
        <end position="26"/>
    </location>
</feature>
<feature type="glycosylation site" description="N-linked (GlcNAc...) asparagine" evidence="1">
    <location>
        <position position="18"/>
    </location>
</feature>
<feature type="glycosylation site" description="N-linked (GlcNAc...) asparagine" evidence="1">
    <location>
        <position position="92"/>
    </location>
</feature>
<feature type="glycosylation site" description="N-linked (GlcNAc...) asparagine" evidence="1">
    <location>
        <position position="113"/>
    </location>
</feature>
<feature type="glycosylation site" description="N-linked (GlcNAc...) asparagine" evidence="1">
    <location>
        <position position="126"/>
    </location>
</feature>
<feature type="sequence conflict" description="In Ref. 1; CAI56430." evidence="10" ref="1">
    <original>S</original>
    <variation>T</variation>
    <location>
        <position position="121"/>
    </location>
</feature>
<feature type="sequence conflict" description="In Ref. 1; CAI56430." evidence="10" ref="1">
    <original>N</original>
    <variation>K</variation>
    <location>
        <position position="124"/>
    </location>
</feature>
<feature type="sequence conflict" description="In Ref. 1; CAI56430." evidence="10" ref="1">
    <original>E</original>
    <variation>V</variation>
    <location>
        <position position="439"/>
    </location>
</feature>
<sequence length="536" mass="60379">MLLCDGLGPEPPRQRHRNRTSAARIRKRPKCCCGDGGSGNQAEQPGGIVSNPISYGQSLTTLARVTAAALTTAAMLHTTNALAATGSSSASNSSTGGIALPLGTATPATHELNATQPFGGSGLNFNESGAGLSDHHHHQQHNPDEDWLDNIVWVFKAFVMLLIIIAAICGNLLVIISVMRVRKLRVITNYFVVSLAMADIMVAIMAMTFNFSVQVTGRWNFSPFLCDLWNSLDVYFSTASILHLCCISVDRYYAIVKPLKYPISMTKRVVGIMLLNTWISPALLSFLPIFIGWYTTPQHQQFVIQNPTQCSFVVNKYYAVISSSISFWIPCTIMIFTYLAIFREANRQEKQLMMRHGNAMLMHRPSMQPSGEALSGSGSSKTLTLHEVEQEHTPTKDKHLIKMKREHKAARTLGIIMGTFILCWLPFFLWYTLSMTCEECQVPDIVVSILFWIGYFNSTLNPLIYAYFNRDFREAFRNTLLCLFCNWWKDRHLPLDIDIRRSSLRYDQRAKSVYSESYLNSTTPSHRRQSQMVDNL</sequence>
<keyword id="KW-1003">Cell membrane</keyword>
<keyword id="KW-0297">G-protein coupled receptor</keyword>
<keyword id="KW-0325">Glycoprotein</keyword>
<keyword id="KW-0472">Membrane</keyword>
<keyword id="KW-0675">Receptor</keyword>
<keyword id="KW-1185">Reference proteome</keyword>
<keyword id="KW-0807">Transducer</keyword>
<keyword id="KW-0812">Transmembrane</keyword>
<keyword id="KW-1133">Transmembrane helix</keyword>
<comment type="function">
    <text evidence="5 7 8 9">Autoreceptor for octopamine (OA), which is a neurotransmitter, neurohormone, and neuromodulator in invertebrates (PubMed:15998303, PubMed:21186359). Essential for ovulation and fertilization (PubMed:25099506, PubMed:25353988). During ovulation it mediates the OA-induced relaxation of the oviduct visceral muscles, by increasing cAMP levels and activating effectors such as calmodulin-dependent kinase II (CaMKII) and cAMP-dependent protein kinase A (PKA) pathways (PubMed:25353988). Positively regulates synaptic growth; an action that is antagonized by Octbeta1R (PubMed:21186359, PubMed:22553037).</text>
</comment>
<comment type="subcellular location">
    <subcellularLocation>
        <location evidence="10">Cell membrane</location>
        <topology evidence="10">Multi-pass membrane protein</topology>
    </subcellularLocation>
</comment>
<comment type="tissue specificity">
    <text evidence="5 6 8 9">In the adult, expressed in the superior protocerebrum and the optic lobe medulla of the central nervous system, nurse cells of egg chambers in the ovary at oogenic stages 1-10, and spermatogonia and spermatocytes in the testis (PubMed:22303848). Expressed in the oviduct epithelium (PubMed:25099506). Also expressed in the spermatheca (PubMed:25353988). Expressed in embryonic and larval ventral nerve cord and brain lobe, embryonic and larval salivary glands and larval imaginal disk and midgut (PubMed:22303848). Also expressed in larval synaptic boutons (PubMed:21186359).</text>
</comment>
<comment type="developmental stage">
    <text evidence="6">Expressed in adult, pupae and third instar larvae. Levels peak at the late embryonic and late larvae stages. Relatively low expression in the pupal stage, with a slight increase in the adult.</text>
</comment>
<comment type="disruption phenotype">
    <text evidence="5 8 9">Males appear viable and fertile whereas females are sterile (PubMed:25099506, PubMed:25353988). Female pre- and post-mating behaviors, such as courtship and post-mating rejection, are not affected and sperm storage appears normal (PubMed:25099506, PubMed:25353988). However, ovulation and egg-laying is severely impaired and females display a strong delay in copulation rates (PubMed:25099506, PubMed:25353988). Ovaries are enlarged due to a higher number of retained eggs and the small number of eggs that are laid are not fertilized (PubMed:25353988). Larvae fail to respond to starvation by increasing locomotor activity (PubMed:21186359). Reduced growth of octopaminergic and glutamatergic (type I and type II) neuromuscular junctions (PubMed:21186359). Decrease in the number of terminal type I and type II boutons and in the motile filopodia-like extensions (synaptopods) which form during the expansion of type II terminals in developing larvae (PubMed:21186359).</text>
</comment>
<comment type="similarity">
    <text evidence="2">Belongs to the G-protein coupled receptor 1 family.</text>
</comment>
<dbReference type="EMBL" id="AJ880689">
    <property type="protein sequence ID" value="CAI56430.1"/>
    <property type="molecule type" value="mRNA"/>
</dbReference>
<dbReference type="EMBL" id="BT053715">
    <property type="protein sequence ID" value="ACK77633.1"/>
    <property type="molecule type" value="mRNA"/>
</dbReference>
<dbReference type="EMBL" id="AE014297">
    <property type="protein sequence ID" value="AAF54835.2"/>
    <property type="molecule type" value="Genomic_DNA"/>
</dbReference>
<dbReference type="EMBL" id="AE014297">
    <property type="protein sequence ID" value="AFH06394.1"/>
    <property type="molecule type" value="Genomic_DNA"/>
</dbReference>
<dbReference type="EMBL" id="AE014297">
    <property type="protein sequence ID" value="AFH06395.1"/>
    <property type="molecule type" value="Genomic_DNA"/>
</dbReference>
<dbReference type="EMBL" id="AE014297">
    <property type="protein sequence ID" value="AFH06396.1"/>
    <property type="molecule type" value="Genomic_DNA"/>
</dbReference>
<dbReference type="RefSeq" id="NP_001034049.1">
    <property type="nucleotide sequence ID" value="NM_001038960.3"/>
</dbReference>
<dbReference type="RefSeq" id="NP_001247076.1">
    <property type="nucleotide sequence ID" value="NM_001260147.1"/>
</dbReference>
<dbReference type="RefSeq" id="NP_001247077.1">
    <property type="nucleotide sequence ID" value="NM_001260148.1"/>
</dbReference>
<dbReference type="RefSeq" id="NP_001247078.1">
    <property type="nucleotide sequence ID" value="NM_001260149.2"/>
</dbReference>
<dbReference type="RefSeq" id="NP_001303505.1">
    <property type="nucleotide sequence ID" value="NM_001316576.1"/>
</dbReference>
<dbReference type="SMR" id="Q4LBB9"/>
<dbReference type="BioGRID" id="66644">
    <property type="interactions" value="3"/>
</dbReference>
<dbReference type="FunCoup" id="Q4LBB9">
    <property type="interactions" value="344"/>
</dbReference>
<dbReference type="IntAct" id="Q4LBB9">
    <property type="interactions" value="3"/>
</dbReference>
<dbReference type="STRING" id="7227.FBpp0303153"/>
<dbReference type="GlyCosmos" id="Q4LBB9">
    <property type="glycosylation" value="4 sites, No reported glycans"/>
</dbReference>
<dbReference type="GlyGen" id="Q4LBB9">
    <property type="glycosylation" value="4 sites"/>
</dbReference>
<dbReference type="PaxDb" id="7227-FBpp0293384"/>
<dbReference type="EnsemblMetazoa" id="FBtr0100019">
    <property type="protein sequence ID" value="FBpp0099980"/>
    <property type="gene ID" value="FBgn0038063"/>
</dbReference>
<dbReference type="EnsemblMetazoa" id="FBtr0304844">
    <property type="protein sequence ID" value="FBpp0293384"/>
    <property type="gene ID" value="FBgn0038063"/>
</dbReference>
<dbReference type="EnsemblMetazoa" id="FBtr0304845">
    <property type="protein sequence ID" value="FBpp0293385"/>
    <property type="gene ID" value="FBgn0038063"/>
</dbReference>
<dbReference type="EnsemblMetazoa" id="FBtr0304846">
    <property type="protein sequence ID" value="FBpp0293386"/>
    <property type="gene ID" value="FBgn0038063"/>
</dbReference>
<dbReference type="EnsemblMetazoa" id="FBtr0347149">
    <property type="protein sequence ID" value="FBpp0312480"/>
    <property type="gene ID" value="FBgn0038063"/>
</dbReference>
<dbReference type="GeneID" id="41549"/>
<dbReference type="KEGG" id="dme:Dmel_CG33976"/>
<dbReference type="UCSC" id="CG33976-RA">
    <property type="organism name" value="d. melanogaster"/>
</dbReference>
<dbReference type="AGR" id="FB:FBgn0038063"/>
<dbReference type="CTD" id="41549"/>
<dbReference type="FlyBase" id="FBgn0038063">
    <property type="gene designation" value="Octbeta2R"/>
</dbReference>
<dbReference type="VEuPathDB" id="VectorBase:FBgn0038063"/>
<dbReference type="eggNOG" id="KOG3656">
    <property type="taxonomic scope" value="Eukaryota"/>
</dbReference>
<dbReference type="HOGENOM" id="CLU_009579_11_0_1"/>
<dbReference type="InParanoid" id="Q4LBB9"/>
<dbReference type="OMA" id="LSMTCEV"/>
<dbReference type="OrthoDB" id="5957871at2759"/>
<dbReference type="PhylomeDB" id="Q4LBB9"/>
<dbReference type="Reactome" id="R-DME-390651">
    <property type="pathway name" value="Dopamine receptors"/>
</dbReference>
<dbReference type="Reactome" id="R-DME-390696">
    <property type="pathway name" value="Adrenoceptors"/>
</dbReference>
<dbReference type="Reactome" id="R-DME-418555">
    <property type="pathway name" value="G alpha (s) signalling events"/>
</dbReference>
<dbReference type="Reactome" id="R-DME-5689880">
    <property type="pathway name" value="Ub-specific processing proteases"/>
</dbReference>
<dbReference type="Reactome" id="R-DME-8856825">
    <property type="pathway name" value="Cargo recognition for clathrin-mediated endocytosis"/>
</dbReference>
<dbReference type="Reactome" id="R-DME-8856828">
    <property type="pathway name" value="Clathrin-mediated endocytosis"/>
</dbReference>
<dbReference type="SignaLink" id="Q4LBB9"/>
<dbReference type="BioGRID-ORCS" id="41549">
    <property type="hits" value="0 hits in 3 CRISPR screens"/>
</dbReference>
<dbReference type="GenomeRNAi" id="41549"/>
<dbReference type="PRO" id="PR:Q4LBB9"/>
<dbReference type="Proteomes" id="UP000000803">
    <property type="component" value="Chromosome 3R"/>
</dbReference>
<dbReference type="Bgee" id="FBgn0038063">
    <property type="expression patterns" value="Expressed in columnar neuron T1 (Drosophila) in insect head and 235 other cell types or tissues"/>
</dbReference>
<dbReference type="ExpressionAtlas" id="Q4LBB9">
    <property type="expression patterns" value="baseline and differential"/>
</dbReference>
<dbReference type="GO" id="GO:0016020">
    <property type="term" value="C:membrane"/>
    <property type="evidence" value="ECO:0000250"/>
    <property type="project" value="FlyBase"/>
</dbReference>
<dbReference type="GO" id="GO:0005886">
    <property type="term" value="C:plasma membrane"/>
    <property type="evidence" value="ECO:0000314"/>
    <property type="project" value="FlyBase"/>
</dbReference>
<dbReference type="GO" id="GO:0003700">
    <property type="term" value="F:DNA-binding transcription factor activity"/>
    <property type="evidence" value="ECO:0007669"/>
    <property type="project" value="InterPro"/>
</dbReference>
<dbReference type="GO" id="GO:0008227">
    <property type="term" value="F:G protein-coupled amine receptor activity"/>
    <property type="evidence" value="ECO:0000250"/>
    <property type="project" value="FlyBase"/>
</dbReference>
<dbReference type="GO" id="GO:0004989">
    <property type="term" value="F:octopamine receptor activity"/>
    <property type="evidence" value="ECO:0000314"/>
    <property type="project" value="FlyBase"/>
</dbReference>
<dbReference type="GO" id="GO:0071880">
    <property type="term" value="P:adenylate cyclase-activating adrenergic receptor signaling pathway"/>
    <property type="evidence" value="ECO:0000318"/>
    <property type="project" value="GO_Central"/>
</dbReference>
<dbReference type="GO" id="GO:0007189">
    <property type="term" value="P:adenylate cyclase-activating G protein-coupled receptor signaling pathway"/>
    <property type="evidence" value="ECO:0000314"/>
    <property type="project" value="FlyBase"/>
</dbReference>
<dbReference type="GO" id="GO:0009566">
    <property type="term" value="P:fertilization"/>
    <property type="evidence" value="ECO:0000315"/>
    <property type="project" value="FlyBase"/>
</dbReference>
<dbReference type="GO" id="GO:0007186">
    <property type="term" value="P:G protein-coupled receptor signaling pathway"/>
    <property type="evidence" value="ECO:0000250"/>
    <property type="project" value="FlyBase"/>
</dbReference>
<dbReference type="GO" id="GO:0030728">
    <property type="term" value="P:ovulation"/>
    <property type="evidence" value="ECO:0000315"/>
    <property type="project" value="FlyBase"/>
</dbReference>
<dbReference type="GO" id="GO:0043410">
    <property type="term" value="P:positive regulation of MAPK cascade"/>
    <property type="evidence" value="ECO:0000318"/>
    <property type="project" value="GO_Central"/>
</dbReference>
<dbReference type="GO" id="GO:0045887">
    <property type="term" value="P:positive regulation of synaptic assembly at neuromuscular junction"/>
    <property type="evidence" value="ECO:0000315"/>
    <property type="project" value="FlyBase"/>
</dbReference>
<dbReference type="CDD" id="cd15066">
    <property type="entry name" value="7tmA_DmOct-betaAR-like"/>
    <property type="match status" value="1"/>
</dbReference>
<dbReference type="FunFam" id="1.20.1070.10:FF:000271">
    <property type="entry name" value="Octopamine receptor beta-2R"/>
    <property type="match status" value="1"/>
</dbReference>
<dbReference type="Gene3D" id="1.20.1070.10">
    <property type="entry name" value="Rhodopsin 7-helix transmembrane proteins"/>
    <property type="match status" value="1"/>
</dbReference>
<dbReference type="InterPro" id="IPR004827">
    <property type="entry name" value="bZIP"/>
</dbReference>
<dbReference type="InterPro" id="IPR000276">
    <property type="entry name" value="GPCR_Rhodpsn"/>
</dbReference>
<dbReference type="InterPro" id="IPR017452">
    <property type="entry name" value="GPCR_Rhodpsn_7TM"/>
</dbReference>
<dbReference type="PANTHER" id="PTHR24248">
    <property type="entry name" value="ADRENERGIC RECEPTOR-RELATED G-PROTEIN COUPLED RECEPTOR"/>
    <property type="match status" value="1"/>
</dbReference>
<dbReference type="PANTHER" id="PTHR24248:SF187">
    <property type="entry name" value="OCTOPAMINE RECEPTOR BETA-2R"/>
    <property type="match status" value="1"/>
</dbReference>
<dbReference type="Pfam" id="PF00001">
    <property type="entry name" value="7tm_1"/>
    <property type="match status" value="1"/>
</dbReference>
<dbReference type="PRINTS" id="PR00237">
    <property type="entry name" value="GPCRRHODOPSN"/>
</dbReference>
<dbReference type="SMART" id="SM01381">
    <property type="entry name" value="7TM_GPCR_Srsx"/>
    <property type="match status" value="1"/>
</dbReference>
<dbReference type="SUPFAM" id="SSF81321">
    <property type="entry name" value="Family A G protein-coupled receptor-like"/>
    <property type="match status" value="1"/>
</dbReference>
<dbReference type="PROSITE" id="PS00237">
    <property type="entry name" value="G_PROTEIN_RECEP_F1_1"/>
    <property type="match status" value="1"/>
</dbReference>
<dbReference type="PROSITE" id="PS50262">
    <property type="entry name" value="G_PROTEIN_RECEP_F1_2"/>
    <property type="match status" value="1"/>
</dbReference>
<gene>
    <name evidence="12" type="primary">Octbeta2R</name>
    <name type="synonym">Octbeta2</name>
    <name evidence="12" type="ORF">CG33976</name>
</gene>
<protein>
    <recommendedName>
        <fullName>Octopamine receptor beta-2R</fullName>
        <shortName>DmOct-beta-12</shortName>
        <shortName>DmOct-beta-2R</shortName>
    </recommendedName>
</protein>